<keyword id="KW-1185">Reference proteome</keyword>
<keyword id="KW-0687">Ribonucleoprotein</keyword>
<keyword id="KW-0689">Ribosomal protein</keyword>
<keyword id="KW-0694">RNA-binding</keyword>
<keyword id="KW-0699">rRNA-binding</keyword>
<feature type="chain" id="PRO_0000305765" description="Small ribosomal subunit protein uS8">
    <location>
        <begin position="1"/>
        <end position="130"/>
    </location>
</feature>
<name>RS8_METLZ</name>
<comment type="function">
    <text evidence="1">One of the primary rRNA binding proteins, it binds directly to 16S rRNA central domain where it helps coordinate assembly of the platform of the 30S subunit.</text>
</comment>
<comment type="subunit">
    <text evidence="1">Part of the 30S ribosomal subunit.</text>
</comment>
<comment type="similarity">
    <text evidence="1">Belongs to the universal ribosomal protein uS8 family.</text>
</comment>
<gene>
    <name evidence="1" type="primary">rps8</name>
    <name type="ordered locus">Mlab_0096</name>
</gene>
<proteinExistence type="inferred from homology"/>
<protein>
    <recommendedName>
        <fullName evidence="1">Small ribosomal subunit protein uS8</fullName>
    </recommendedName>
    <alternativeName>
        <fullName evidence="2">30S ribosomal protein S8</fullName>
    </alternativeName>
</protein>
<accession>A2SPL7</accession>
<organism>
    <name type="scientific">Methanocorpusculum labreanum (strain ATCC 43576 / DSM 4855 / Z)</name>
    <dbReference type="NCBI Taxonomy" id="410358"/>
    <lineage>
        <taxon>Archaea</taxon>
        <taxon>Methanobacteriati</taxon>
        <taxon>Methanobacteriota</taxon>
        <taxon>Stenosarchaea group</taxon>
        <taxon>Methanomicrobia</taxon>
        <taxon>Methanomicrobiales</taxon>
        <taxon>Methanocorpusculaceae</taxon>
        <taxon>Methanocorpusculum</taxon>
    </lineage>
</organism>
<reference key="1">
    <citation type="journal article" date="2009" name="Stand. Genomic Sci.">
        <title>Complete genome sequence of Methanocorpusculum labreanum type strain Z.</title>
        <authorList>
            <person name="Anderson I.J."/>
            <person name="Sieprawska-Lupa M."/>
            <person name="Goltsman E."/>
            <person name="Lapidus A."/>
            <person name="Copeland A."/>
            <person name="Glavina Del Rio T."/>
            <person name="Tice H."/>
            <person name="Dalin E."/>
            <person name="Barry K."/>
            <person name="Pitluck S."/>
            <person name="Hauser L."/>
            <person name="Land M."/>
            <person name="Lucas S."/>
            <person name="Richardson P."/>
            <person name="Whitman W.B."/>
            <person name="Kyrpides N.C."/>
        </authorList>
    </citation>
    <scope>NUCLEOTIDE SEQUENCE [LARGE SCALE GENOMIC DNA]</scope>
    <source>
        <strain>ATCC 43576 / DSM 4855 / Z</strain>
    </source>
</reference>
<evidence type="ECO:0000255" key="1">
    <source>
        <dbReference type="HAMAP-Rule" id="MF_01302"/>
    </source>
</evidence>
<evidence type="ECO:0000305" key="2"/>
<dbReference type="EMBL" id="CP000559">
    <property type="protein sequence ID" value="ABN06273.1"/>
    <property type="molecule type" value="Genomic_DNA"/>
</dbReference>
<dbReference type="RefSeq" id="WP_011832474.1">
    <property type="nucleotide sequence ID" value="NC_008942.1"/>
</dbReference>
<dbReference type="SMR" id="A2SPL7"/>
<dbReference type="STRING" id="410358.Mlab_0096"/>
<dbReference type="GeneID" id="4795508"/>
<dbReference type="KEGG" id="mla:Mlab_0096"/>
<dbReference type="eggNOG" id="arCOG04091">
    <property type="taxonomic scope" value="Archaea"/>
</dbReference>
<dbReference type="HOGENOM" id="CLU_098428_1_1_2"/>
<dbReference type="OrthoDB" id="5670at2157"/>
<dbReference type="Proteomes" id="UP000000365">
    <property type="component" value="Chromosome"/>
</dbReference>
<dbReference type="GO" id="GO:1990904">
    <property type="term" value="C:ribonucleoprotein complex"/>
    <property type="evidence" value="ECO:0007669"/>
    <property type="project" value="UniProtKB-KW"/>
</dbReference>
<dbReference type="GO" id="GO:0005840">
    <property type="term" value="C:ribosome"/>
    <property type="evidence" value="ECO:0007669"/>
    <property type="project" value="UniProtKB-KW"/>
</dbReference>
<dbReference type="GO" id="GO:0019843">
    <property type="term" value="F:rRNA binding"/>
    <property type="evidence" value="ECO:0007669"/>
    <property type="project" value="UniProtKB-UniRule"/>
</dbReference>
<dbReference type="GO" id="GO:0003735">
    <property type="term" value="F:structural constituent of ribosome"/>
    <property type="evidence" value="ECO:0007669"/>
    <property type="project" value="InterPro"/>
</dbReference>
<dbReference type="GO" id="GO:0006412">
    <property type="term" value="P:translation"/>
    <property type="evidence" value="ECO:0007669"/>
    <property type="project" value="UniProtKB-UniRule"/>
</dbReference>
<dbReference type="FunFam" id="3.30.1490.10:FF:000002">
    <property type="entry name" value="40S ribosomal protein S15a"/>
    <property type="match status" value="1"/>
</dbReference>
<dbReference type="Gene3D" id="3.30.1370.30">
    <property type="match status" value="1"/>
</dbReference>
<dbReference type="Gene3D" id="3.30.1490.10">
    <property type="match status" value="1"/>
</dbReference>
<dbReference type="HAMAP" id="MF_01302_A">
    <property type="entry name" value="Ribosomal_uS8_A"/>
    <property type="match status" value="1"/>
</dbReference>
<dbReference type="InterPro" id="IPR000630">
    <property type="entry name" value="Ribosomal_uS8"/>
</dbReference>
<dbReference type="InterPro" id="IPR047863">
    <property type="entry name" value="Ribosomal_uS8_CS"/>
</dbReference>
<dbReference type="InterPro" id="IPR035987">
    <property type="entry name" value="Ribosomal_uS8_sf"/>
</dbReference>
<dbReference type="NCBIfam" id="NF003115">
    <property type="entry name" value="PRK04034.1"/>
    <property type="match status" value="1"/>
</dbReference>
<dbReference type="PANTHER" id="PTHR11758">
    <property type="entry name" value="40S RIBOSOMAL PROTEIN S15A"/>
    <property type="match status" value="1"/>
</dbReference>
<dbReference type="Pfam" id="PF00410">
    <property type="entry name" value="Ribosomal_S8"/>
    <property type="match status" value="1"/>
</dbReference>
<dbReference type="SUPFAM" id="SSF56047">
    <property type="entry name" value="Ribosomal protein S8"/>
    <property type="match status" value="1"/>
</dbReference>
<dbReference type="PROSITE" id="PS00053">
    <property type="entry name" value="RIBOSOMAL_S8"/>
    <property type="match status" value="1"/>
</dbReference>
<sequence>MTKQNPIADAMSAIKNAGDTGKLAVTVEPASRLFGDMLKVMQEYGYITGFEKIDDGRGGQFQIALSGGINKCGVITPRFSVKVEDLESWEIRYLPGKGFGIIILTTSKGVMSHEQARKLGVGGELLGYVF</sequence>